<dbReference type="EC" id="3.6.4.-" evidence="1"/>
<dbReference type="EMBL" id="CP001488">
    <property type="protein sequence ID" value="ACO01437.1"/>
    <property type="molecule type" value="Genomic_DNA"/>
</dbReference>
<dbReference type="RefSeq" id="WP_004684152.1">
    <property type="nucleotide sequence ID" value="NC_012441.1"/>
</dbReference>
<dbReference type="SMR" id="C0REW5"/>
<dbReference type="GeneID" id="29593091"/>
<dbReference type="KEGG" id="bmi:BMEA_A1755"/>
<dbReference type="HOGENOM" id="CLU_055599_1_0_5"/>
<dbReference type="Proteomes" id="UP000001748">
    <property type="component" value="Chromosome I"/>
</dbReference>
<dbReference type="GO" id="GO:0005737">
    <property type="term" value="C:cytoplasm"/>
    <property type="evidence" value="ECO:0007669"/>
    <property type="project" value="UniProtKB-SubCell"/>
</dbReference>
<dbReference type="GO" id="GO:0048476">
    <property type="term" value="C:Holliday junction resolvase complex"/>
    <property type="evidence" value="ECO:0007669"/>
    <property type="project" value="UniProtKB-UniRule"/>
</dbReference>
<dbReference type="GO" id="GO:0005524">
    <property type="term" value="F:ATP binding"/>
    <property type="evidence" value="ECO:0007669"/>
    <property type="project" value="UniProtKB-UniRule"/>
</dbReference>
<dbReference type="GO" id="GO:0016887">
    <property type="term" value="F:ATP hydrolysis activity"/>
    <property type="evidence" value="ECO:0007669"/>
    <property type="project" value="InterPro"/>
</dbReference>
<dbReference type="GO" id="GO:0000400">
    <property type="term" value="F:four-way junction DNA binding"/>
    <property type="evidence" value="ECO:0007669"/>
    <property type="project" value="UniProtKB-UniRule"/>
</dbReference>
<dbReference type="GO" id="GO:0009378">
    <property type="term" value="F:four-way junction helicase activity"/>
    <property type="evidence" value="ECO:0007669"/>
    <property type="project" value="InterPro"/>
</dbReference>
<dbReference type="GO" id="GO:0006310">
    <property type="term" value="P:DNA recombination"/>
    <property type="evidence" value="ECO:0007669"/>
    <property type="project" value="UniProtKB-UniRule"/>
</dbReference>
<dbReference type="GO" id="GO:0006281">
    <property type="term" value="P:DNA repair"/>
    <property type="evidence" value="ECO:0007669"/>
    <property type="project" value="UniProtKB-UniRule"/>
</dbReference>
<dbReference type="CDD" id="cd00009">
    <property type="entry name" value="AAA"/>
    <property type="match status" value="1"/>
</dbReference>
<dbReference type="Gene3D" id="1.10.8.60">
    <property type="match status" value="1"/>
</dbReference>
<dbReference type="Gene3D" id="3.40.50.300">
    <property type="entry name" value="P-loop containing nucleotide triphosphate hydrolases"/>
    <property type="match status" value="1"/>
</dbReference>
<dbReference type="Gene3D" id="1.10.10.10">
    <property type="entry name" value="Winged helix-like DNA-binding domain superfamily/Winged helix DNA-binding domain"/>
    <property type="match status" value="1"/>
</dbReference>
<dbReference type="HAMAP" id="MF_00016">
    <property type="entry name" value="DNA_HJ_migration_RuvB"/>
    <property type="match status" value="1"/>
</dbReference>
<dbReference type="InterPro" id="IPR003593">
    <property type="entry name" value="AAA+_ATPase"/>
</dbReference>
<dbReference type="InterPro" id="IPR041445">
    <property type="entry name" value="AAA_lid_4"/>
</dbReference>
<dbReference type="InterPro" id="IPR000641">
    <property type="entry name" value="CbxX/CfxQ"/>
</dbReference>
<dbReference type="InterPro" id="IPR004605">
    <property type="entry name" value="DNA_helicase_Holl-junc_RuvB"/>
</dbReference>
<dbReference type="InterPro" id="IPR027417">
    <property type="entry name" value="P-loop_NTPase"/>
</dbReference>
<dbReference type="InterPro" id="IPR008824">
    <property type="entry name" value="RuvB-like_N"/>
</dbReference>
<dbReference type="InterPro" id="IPR008823">
    <property type="entry name" value="RuvB_C"/>
</dbReference>
<dbReference type="InterPro" id="IPR036388">
    <property type="entry name" value="WH-like_DNA-bd_sf"/>
</dbReference>
<dbReference type="InterPro" id="IPR036390">
    <property type="entry name" value="WH_DNA-bd_sf"/>
</dbReference>
<dbReference type="NCBIfam" id="NF000868">
    <property type="entry name" value="PRK00080.1"/>
    <property type="match status" value="1"/>
</dbReference>
<dbReference type="NCBIfam" id="TIGR00635">
    <property type="entry name" value="ruvB"/>
    <property type="match status" value="1"/>
</dbReference>
<dbReference type="PANTHER" id="PTHR42848">
    <property type="match status" value="1"/>
</dbReference>
<dbReference type="PANTHER" id="PTHR42848:SF1">
    <property type="entry name" value="HOLLIDAY JUNCTION BRANCH MIGRATION COMPLEX SUBUNIT RUVB"/>
    <property type="match status" value="1"/>
</dbReference>
<dbReference type="Pfam" id="PF17864">
    <property type="entry name" value="AAA_lid_4"/>
    <property type="match status" value="1"/>
</dbReference>
<dbReference type="Pfam" id="PF05491">
    <property type="entry name" value="RuvB_C"/>
    <property type="match status" value="1"/>
</dbReference>
<dbReference type="Pfam" id="PF05496">
    <property type="entry name" value="RuvB_N"/>
    <property type="match status" value="1"/>
</dbReference>
<dbReference type="PRINTS" id="PR00819">
    <property type="entry name" value="CBXCFQXSUPER"/>
</dbReference>
<dbReference type="SMART" id="SM00382">
    <property type="entry name" value="AAA"/>
    <property type="match status" value="1"/>
</dbReference>
<dbReference type="SUPFAM" id="SSF52540">
    <property type="entry name" value="P-loop containing nucleoside triphosphate hydrolases"/>
    <property type="match status" value="1"/>
</dbReference>
<dbReference type="SUPFAM" id="SSF46785">
    <property type="entry name" value="Winged helix' DNA-binding domain"/>
    <property type="match status" value="1"/>
</dbReference>
<reference key="1">
    <citation type="submission" date="2009-03" db="EMBL/GenBank/DDBJ databases">
        <title>Brucella melitensis ATCC 23457 whole genome shotgun sequencing project.</title>
        <authorList>
            <person name="Setubal J.C."/>
            <person name="Boyle S."/>
            <person name="Crasta O.R."/>
            <person name="Gillespie J.J."/>
            <person name="Kenyon R.W."/>
            <person name="Lu J."/>
            <person name="Mane S."/>
            <person name="Nagrani S."/>
            <person name="Shallom J.M."/>
            <person name="Shallom S."/>
            <person name="Shukla M."/>
            <person name="Snyder E.E."/>
            <person name="Sobral B.W."/>
            <person name="Wattam A.R."/>
            <person name="Will R."/>
            <person name="Williams K."/>
            <person name="Yoo H."/>
            <person name="Munk C."/>
            <person name="Tapia R."/>
            <person name="Han C."/>
            <person name="Detter J.C."/>
            <person name="Bruce D."/>
            <person name="Brettin T.S."/>
        </authorList>
    </citation>
    <scope>NUCLEOTIDE SEQUENCE [LARGE SCALE GENOMIC DNA]</scope>
    <source>
        <strain>ATCC 23457</strain>
    </source>
</reference>
<gene>
    <name evidence="1" type="primary">ruvB</name>
    <name type="ordered locus">BMEA_A1755</name>
</gene>
<proteinExistence type="inferred from homology"/>
<accession>C0REW5</accession>
<name>RUVB_BRUMB</name>
<keyword id="KW-0067">ATP-binding</keyword>
<keyword id="KW-0963">Cytoplasm</keyword>
<keyword id="KW-0227">DNA damage</keyword>
<keyword id="KW-0233">DNA recombination</keyword>
<keyword id="KW-0234">DNA repair</keyword>
<keyword id="KW-0238">DNA-binding</keyword>
<keyword id="KW-0378">Hydrolase</keyword>
<keyword id="KW-0547">Nucleotide-binding</keyword>
<feature type="chain" id="PRO_1000195207" description="Holliday junction branch migration complex subunit RuvB">
    <location>
        <begin position="1"/>
        <end position="346"/>
    </location>
</feature>
<feature type="region of interest" description="Large ATPase domain (RuvB-L)" evidence="1">
    <location>
        <begin position="1"/>
        <end position="181"/>
    </location>
</feature>
<feature type="region of interest" description="Small ATPAse domain (RuvB-S)" evidence="1">
    <location>
        <begin position="182"/>
        <end position="252"/>
    </location>
</feature>
<feature type="region of interest" description="Head domain (RuvB-H)" evidence="1">
    <location>
        <begin position="255"/>
        <end position="346"/>
    </location>
</feature>
<feature type="binding site" evidence="1">
    <location>
        <position position="20"/>
    </location>
    <ligand>
        <name>ATP</name>
        <dbReference type="ChEBI" id="CHEBI:30616"/>
    </ligand>
</feature>
<feature type="binding site" evidence="1">
    <location>
        <position position="21"/>
    </location>
    <ligand>
        <name>ATP</name>
        <dbReference type="ChEBI" id="CHEBI:30616"/>
    </ligand>
</feature>
<feature type="binding site" evidence="1">
    <location>
        <position position="62"/>
    </location>
    <ligand>
        <name>ATP</name>
        <dbReference type="ChEBI" id="CHEBI:30616"/>
    </ligand>
</feature>
<feature type="binding site" evidence="1">
    <location>
        <position position="65"/>
    </location>
    <ligand>
        <name>ATP</name>
        <dbReference type="ChEBI" id="CHEBI:30616"/>
    </ligand>
</feature>
<feature type="binding site" evidence="1">
    <location>
        <position position="66"/>
    </location>
    <ligand>
        <name>ATP</name>
        <dbReference type="ChEBI" id="CHEBI:30616"/>
    </ligand>
</feature>
<feature type="binding site" evidence="1">
    <location>
        <position position="66"/>
    </location>
    <ligand>
        <name>Mg(2+)</name>
        <dbReference type="ChEBI" id="CHEBI:18420"/>
    </ligand>
</feature>
<feature type="binding site" evidence="1">
    <location>
        <position position="67"/>
    </location>
    <ligand>
        <name>ATP</name>
        <dbReference type="ChEBI" id="CHEBI:30616"/>
    </ligand>
</feature>
<feature type="binding site" evidence="1">
    <location>
        <begin position="128"/>
        <end position="130"/>
    </location>
    <ligand>
        <name>ATP</name>
        <dbReference type="ChEBI" id="CHEBI:30616"/>
    </ligand>
</feature>
<feature type="binding site" evidence="1">
    <location>
        <position position="171"/>
    </location>
    <ligand>
        <name>ATP</name>
        <dbReference type="ChEBI" id="CHEBI:30616"/>
    </ligand>
</feature>
<feature type="binding site" evidence="1">
    <location>
        <position position="181"/>
    </location>
    <ligand>
        <name>ATP</name>
        <dbReference type="ChEBI" id="CHEBI:30616"/>
    </ligand>
</feature>
<feature type="binding site" evidence="1">
    <location>
        <position position="218"/>
    </location>
    <ligand>
        <name>ATP</name>
        <dbReference type="ChEBI" id="CHEBI:30616"/>
    </ligand>
</feature>
<feature type="binding site" evidence="1">
    <location>
        <position position="291"/>
    </location>
    <ligand>
        <name>DNA</name>
        <dbReference type="ChEBI" id="CHEBI:16991"/>
    </ligand>
</feature>
<feature type="binding site" evidence="1">
    <location>
        <position position="310"/>
    </location>
    <ligand>
        <name>DNA</name>
        <dbReference type="ChEBI" id="CHEBI:16991"/>
    </ligand>
</feature>
<feature type="binding site" evidence="1">
    <location>
        <position position="315"/>
    </location>
    <ligand>
        <name>DNA</name>
        <dbReference type="ChEBI" id="CHEBI:16991"/>
    </ligand>
</feature>
<protein>
    <recommendedName>
        <fullName evidence="1">Holliday junction branch migration complex subunit RuvB</fullName>
        <ecNumber evidence="1">3.6.4.-</ecNumber>
    </recommendedName>
</protein>
<evidence type="ECO:0000255" key="1">
    <source>
        <dbReference type="HAMAP-Rule" id="MF_00016"/>
    </source>
</evidence>
<comment type="function">
    <text evidence="1">The RuvA-RuvB-RuvC complex processes Holliday junction (HJ) DNA during genetic recombination and DNA repair, while the RuvA-RuvB complex plays an important role in the rescue of blocked DNA replication forks via replication fork reversal (RFR). RuvA specifically binds to HJ cruciform DNA, conferring on it an open structure. The RuvB hexamer acts as an ATP-dependent pump, pulling dsDNA into and through the RuvAB complex. RuvB forms 2 homohexamers on either side of HJ DNA bound by 1 or 2 RuvA tetramers; 4 subunits per hexamer contact DNA at a time. Coordinated motions by a converter formed by DNA-disengaged RuvB subunits stimulates ATP hydrolysis and nucleotide exchange. Immobilization of the converter enables RuvB to convert the ATP-contained energy into a lever motion, pulling 2 nucleotides of DNA out of the RuvA tetramer per ATP hydrolyzed, thus driving DNA branch migration. The RuvB motors rotate together with the DNA substrate, which together with the progressing nucleotide cycle form the mechanistic basis for DNA recombination by continuous HJ branch migration. Branch migration allows RuvC to scan DNA until it finds its consensus sequence, where it cleaves and resolves cruciform DNA.</text>
</comment>
<comment type="catalytic activity">
    <reaction evidence="1">
        <text>ATP + H2O = ADP + phosphate + H(+)</text>
        <dbReference type="Rhea" id="RHEA:13065"/>
        <dbReference type="ChEBI" id="CHEBI:15377"/>
        <dbReference type="ChEBI" id="CHEBI:15378"/>
        <dbReference type="ChEBI" id="CHEBI:30616"/>
        <dbReference type="ChEBI" id="CHEBI:43474"/>
        <dbReference type="ChEBI" id="CHEBI:456216"/>
    </reaction>
</comment>
<comment type="subunit">
    <text evidence="1">Homohexamer. Forms an RuvA(8)-RuvB(12)-Holliday junction (HJ) complex. HJ DNA is sandwiched between 2 RuvA tetramers; dsDNA enters through RuvA and exits via RuvB. An RuvB hexamer assembles on each DNA strand where it exits the tetramer. Each RuvB hexamer is contacted by two RuvA subunits (via domain III) on 2 adjacent RuvB subunits; this complex drives branch migration. In the full resolvosome a probable DNA-RuvA(4)-RuvB(12)-RuvC(2) complex forms which resolves the HJ.</text>
</comment>
<comment type="subcellular location">
    <subcellularLocation>
        <location evidence="1">Cytoplasm</location>
    </subcellularLocation>
</comment>
<comment type="domain">
    <text evidence="1">Has 3 domains, the large (RuvB-L) and small ATPase (RuvB-S) domains and the C-terminal head (RuvB-H) domain. The head domain binds DNA, while the ATPase domains jointly bind ATP, ADP or are empty depending on the state of the subunit in the translocation cycle. During a single DNA translocation step the structure of each domain remains the same, but their relative positions change.</text>
</comment>
<comment type="similarity">
    <text evidence="1">Belongs to the RuvB family.</text>
</comment>
<sequence length="346" mass="38269">MSDRNPLIDADRRADEDNTLRPQTLDDFVGQAAARANLKVFIEAAKVRGEALDHVLFVGPPGLGKTTLAQIMAKELGVNFRSTSGPVIAKAGDLAALLTNLEERDVLFIDEIHRLSPAVEEILYPAMEDFQLDLIIGEGPAARSVKIDLAKFTLVAATTRLGLLTTPLRDRFGIPVRLNFYTVEELEYIVRRGARIMQMGISSDGAREVARRSRGTPRIVGRLLRRVRDFALVAGADIIDRRIADEALSRLEVDNRGLDQLDRRYLNIIARNFGGGPVGIETIAAGLSEPRDAIEDIIEPYLIQQGFLQRTPRGRVLTAVAWQHLGLPAPAEIIQQSQYGLFMEDE</sequence>
<organism>
    <name type="scientific">Brucella melitensis biotype 2 (strain ATCC 23457)</name>
    <dbReference type="NCBI Taxonomy" id="546272"/>
    <lineage>
        <taxon>Bacteria</taxon>
        <taxon>Pseudomonadati</taxon>
        <taxon>Pseudomonadota</taxon>
        <taxon>Alphaproteobacteria</taxon>
        <taxon>Hyphomicrobiales</taxon>
        <taxon>Brucellaceae</taxon>
        <taxon>Brucella/Ochrobactrum group</taxon>
        <taxon>Brucella</taxon>
    </lineage>
</organism>